<gene>
    <name evidence="1" type="primary">argS</name>
    <name type="ordered locus">SAB0559</name>
</gene>
<evidence type="ECO:0000255" key="1">
    <source>
        <dbReference type="HAMAP-Rule" id="MF_00123"/>
    </source>
</evidence>
<reference key="1">
    <citation type="journal article" date="2007" name="PLoS ONE">
        <title>Molecular correlates of host specialization in Staphylococcus aureus.</title>
        <authorList>
            <person name="Herron-Olson L."/>
            <person name="Fitzgerald J.R."/>
            <person name="Musser J.M."/>
            <person name="Kapur V."/>
        </authorList>
    </citation>
    <scope>NUCLEOTIDE SEQUENCE [LARGE SCALE GENOMIC DNA]</scope>
    <source>
        <strain>bovine RF122 / ET3-1</strain>
    </source>
</reference>
<comment type="catalytic activity">
    <reaction evidence="1">
        <text>tRNA(Arg) + L-arginine + ATP = L-arginyl-tRNA(Arg) + AMP + diphosphate</text>
        <dbReference type="Rhea" id="RHEA:20301"/>
        <dbReference type="Rhea" id="RHEA-COMP:9658"/>
        <dbReference type="Rhea" id="RHEA-COMP:9673"/>
        <dbReference type="ChEBI" id="CHEBI:30616"/>
        <dbReference type="ChEBI" id="CHEBI:32682"/>
        <dbReference type="ChEBI" id="CHEBI:33019"/>
        <dbReference type="ChEBI" id="CHEBI:78442"/>
        <dbReference type="ChEBI" id="CHEBI:78513"/>
        <dbReference type="ChEBI" id="CHEBI:456215"/>
        <dbReference type="EC" id="6.1.1.19"/>
    </reaction>
</comment>
<comment type="subunit">
    <text evidence="1">Monomer.</text>
</comment>
<comment type="subcellular location">
    <subcellularLocation>
        <location evidence="1">Cytoplasm</location>
    </subcellularLocation>
</comment>
<comment type="similarity">
    <text evidence="1">Belongs to the class-I aminoacyl-tRNA synthetase family.</text>
</comment>
<protein>
    <recommendedName>
        <fullName evidence="1">Arginine--tRNA ligase</fullName>
        <ecNumber evidence="1">6.1.1.19</ecNumber>
    </recommendedName>
    <alternativeName>
        <fullName evidence="1">Arginyl-tRNA synthetase</fullName>
        <shortName evidence="1">ArgRS</shortName>
    </alternativeName>
</protein>
<feature type="chain" id="PRO_0000242095" description="Arginine--tRNA ligase">
    <location>
        <begin position="1"/>
        <end position="553"/>
    </location>
</feature>
<feature type="short sequence motif" description="'HIGH' region">
    <location>
        <begin position="130"/>
        <end position="140"/>
    </location>
</feature>
<organism>
    <name type="scientific">Staphylococcus aureus (strain bovine RF122 / ET3-1)</name>
    <dbReference type="NCBI Taxonomy" id="273036"/>
    <lineage>
        <taxon>Bacteria</taxon>
        <taxon>Bacillati</taxon>
        <taxon>Bacillota</taxon>
        <taxon>Bacilli</taxon>
        <taxon>Bacillales</taxon>
        <taxon>Staphylococcaceae</taxon>
        <taxon>Staphylococcus</taxon>
    </lineage>
</organism>
<accession>Q2YSW8</accession>
<sequence length="553" mass="62396">MNIIDQVKQTLVEEIAASINKAGLADEIPDIKIEVPKDTKNGDYATNIAMVLTKIAKRNPREIAQAIVDNLDTEKAHVKQIDIAGPGFINFYLDNQYLTAIIPEAIEKGDQFGYVNESKGQNVLLEYVSANPTGDLHIGHARNAAVGDALANILTAAGYNVTREYYINDAGNQITNLARSIETRFFEALGDNSYSMPEDGYNGKDIIEIGKDLAEKRPEIKDYSEEARLKEFRKLGVEYEMAKLKNDLAEFNTHFDNWFSETSLYEKGEILEVLAKMKELGYTYEADGATWLRTTDFKDDKDRVLIKNDGTYTYFLPDIAYHFDKVKRGNDILIDLFGADHHGYINRLKASLETFGVDSNRLEIQIMQMVRLMENGKEVKMSKRTGNAITLREIMDEVGVDAARYFLTMRSPDSHFDFDMELAKEQSQDNPVYYAQYAHARICSILKQAKEQGIEVAAANDFTTITNEKAIELLKKVADFEPTIESAAEHRSAHRITNYIQDLASHFHKFYNAEKVLTDDIEKTKAHVAMIEAVRITLKNALAMVGVSAPESM</sequence>
<proteinExistence type="inferred from homology"/>
<name>SYR_STAAB</name>
<keyword id="KW-0030">Aminoacyl-tRNA synthetase</keyword>
<keyword id="KW-0067">ATP-binding</keyword>
<keyword id="KW-0963">Cytoplasm</keyword>
<keyword id="KW-0436">Ligase</keyword>
<keyword id="KW-0547">Nucleotide-binding</keyword>
<keyword id="KW-0648">Protein biosynthesis</keyword>
<dbReference type="EC" id="6.1.1.19" evidence="1"/>
<dbReference type="EMBL" id="AJ938182">
    <property type="protein sequence ID" value="CAI80247.1"/>
    <property type="molecule type" value="Genomic_DNA"/>
</dbReference>
<dbReference type="RefSeq" id="WP_001021154.1">
    <property type="nucleotide sequence ID" value="NC_007622.1"/>
</dbReference>
<dbReference type="SMR" id="Q2YSW8"/>
<dbReference type="KEGG" id="sab:SAB0559"/>
<dbReference type="HOGENOM" id="CLU_006406_0_1_9"/>
<dbReference type="GO" id="GO:0005737">
    <property type="term" value="C:cytoplasm"/>
    <property type="evidence" value="ECO:0007669"/>
    <property type="project" value="UniProtKB-SubCell"/>
</dbReference>
<dbReference type="GO" id="GO:0004814">
    <property type="term" value="F:arginine-tRNA ligase activity"/>
    <property type="evidence" value="ECO:0007669"/>
    <property type="project" value="UniProtKB-UniRule"/>
</dbReference>
<dbReference type="GO" id="GO:0005524">
    <property type="term" value="F:ATP binding"/>
    <property type="evidence" value="ECO:0007669"/>
    <property type="project" value="UniProtKB-UniRule"/>
</dbReference>
<dbReference type="GO" id="GO:0006420">
    <property type="term" value="P:arginyl-tRNA aminoacylation"/>
    <property type="evidence" value="ECO:0007669"/>
    <property type="project" value="UniProtKB-UniRule"/>
</dbReference>
<dbReference type="CDD" id="cd00671">
    <property type="entry name" value="ArgRS_core"/>
    <property type="match status" value="1"/>
</dbReference>
<dbReference type="FunFam" id="1.10.730.10:FF:000008">
    <property type="entry name" value="Arginine--tRNA ligase"/>
    <property type="match status" value="1"/>
</dbReference>
<dbReference type="FunFam" id="3.30.1360.70:FF:000003">
    <property type="entry name" value="Arginine--tRNA ligase"/>
    <property type="match status" value="1"/>
</dbReference>
<dbReference type="FunFam" id="3.40.50.620:FF:000062">
    <property type="entry name" value="Arginine--tRNA ligase"/>
    <property type="match status" value="1"/>
</dbReference>
<dbReference type="Gene3D" id="3.30.1360.70">
    <property type="entry name" value="Arginyl tRNA synthetase N-terminal domain"/>
    <property type="match status" value="1"/>
</dbReference>
<dbReference type="Gene3D" id="3.40.50.620">
    <property type="entry name" value="HUPs"/>
    <property type="match status" value="1"/>
</dbReference>
<dbReference type="Gene3D" id="1.10.730.10">
    <property type="entry name" value="Isoleucyl-tRNA Synthetase, Domain 1"/>
    <property type="match status" value="1"/>
</dbReference>
<dbReference type="HAMAP" id="MF_00123">
    <property type="entry name" value="Arg_tRNA_synth"/>
    <property type="match status" value="1"/>
</dbReference>
<dbReference type="InterPro" id="IPR001412">
    <property type="entry name" value="aa-tRNA-synth_I_CS"/>
</dbReference>
<dbReference type="InterPro" id="IPR001278">
    <property type="entry name" value="Arg-tRNA-ligase"/>
</dbReference>
<dbReference type="InterPro" id="IPR005148">
    <property type="entry name" value="Arg-tRNA-synth_N"/>
</dbReference>
<dbReference type="InterPro" id="IPR036695">
    <property type="entry name" value="Arg-tRNA-synth_N_sf"/>
</dbReference>
<dbReference type="InterPro" id="IPR035684">
    <property type="entry name" value="ArgRS_core"/>
</dbReference>
<dbReference type="InterPro" id="IPR008909">
    <property type="entry name" value="DALR_anticod-bd"/>
</dbReference>
<dbReference type="InterPro" id="IPR014729">
    <property type="entry name" value="Rossmann-like_a/b/a_fold"/>
</dbReference>
<dbReference type="InterPro" id="IPR009080">
    <property type="entry name" value="tRNAsynth_Ia_anticodon-bd"/>
</dbReference>
<dbReference type="NCBIfam" id="TIGR00456">
    <property type="entry name" value="argS"/>
    <property type="match status" value="1"/>
</dbReference>
<dbReference type="PANTHER" id="PTHR11956:SF5">
    <property type="entry name" value="ARGININE--TRNA LIGASE, CYTOPLASMIC"/>
    <property type="match status" value="1"/>
</dbReference>
<dbReference type="PANTHER" id="PTHR11956">
    <property type="entry name" value="ARGINYL-TRNA SYNTHETASE"/>
    <property type="match status" value="1"/>
</dbReference>
<dbReference type="Pfam" id="PF03485">
    <property type="entry name" value="Arg_tRNA_synt_N"/>
    <property type="match status" value="1"/>
</dbReference>
<dbReference type="Pfam" id="PF05746">
    <property type="entry name" value="DALR_1"/>
    <property type="match status" value="1"/>
</dbReference>
<dbReference type="Pfam" id="PF00750">
    <property type="entry name" value="tRNA-synt_1d"/>
    <property type="match status" value="1"/>
</dbReference>
<dbReference type="PRINTS" id="PR01038">
    <property type="entry name" value="TRNASYNTHARG"/>
</dbReference>
<dbReference type="SMART" id="SM01016">
    <property type="entry name" value="Arg_tRNA_synt_N"/>
    <property type="match status" value="1"/>
</dbReference>
<dbReference type="SMART" id="SM00836">
    <property type="entry name" value="DALR_1"/>
    <property type="match status" value="1"/>
</dbReference>
<dbReference type="SUPFAM" id="SSF47323">
    <property type="entry name" value="Anticodon-binding domain of a subclass of class I aminoacyl-tRNA synthetases"/>
    <property type="match status" value="1"/>
</dbReference>
<dbReference type="SUPFAM" id="SSF55190">
    <property type="entry name" value="Arginyl-tRNA synthetase (ArgRS), N-terminal 'additional' domain"/>
    <property type="match status" value="1"/>
</dbReference>
<dbReference type="SUPFAM" id="SSF52374">
    <property type="entry name" value="Nucleotidylyl transferase"/>
    <property type="match status" value="1"/>
</dbReference>
<dbReference type="PROSITE" id="PS00178">
    <property type="entry name" value="AA_TRNA_LIGASE_I"/>
    <property type="match status" value="1"/>
</dbReference>